<gene>
    <name evidence="1" type="primary">NP</name>
</gene>
<sequence>MSNMDIDGINAGTIDKTPEETTSGTSGATRPIIRPATLAPPSNKRTRNPSPERATTSSEADIGRRTQKKQTPTEIKKSVYNMVVKLGEFYNQMMVKAGLNDDMERNLIQNAHAVERILLAATDDKKTEFQKKKNARDVKEGKEEIDHNKTGGTFYKMVRDDKTIYFSPIRITFLKEEVKTMYKTTMGSDGFSGLNHIMIGHSQMNDVCFQRSKALKRVGLDPSLISTFAGSTLPRRSGTTGVATKGGGTLVAEAIRFIGRAMADRGLLRDIKAKTAYEKILLNLKNKCSAPQQKALVDQVIGSRNPGIADIEDLTLLARSMVVVRPSVASKVVLPISIYAKIPQLGFNVEEYSMVGYEAMALYNMATPVSILRMGDDAKDKSQLFFMSCFGAAYEDLRVLSALTGTEFKPRSALKCKGFHVPAKEQVEGMGAALMSIKLQFWAPMTRSGGNEVGGDGGSGQISCNPVFAVERPIALSKQAVRRMLSMNIEGRDADVKGNLLKMMNDSMAKKTNGNAFIGKKMFQISDKNKTNPIEIQIKQTIPNFFFGRDTAEDYDDLDY</sequence>
<feature type="chain" id="PRO_0000079139" description="Nucleoprotein">
    <location>
        <begin position="1"/>
        <end position="560"/>
    </location>
</feature>
<feature type="region of interest" description="Disordered" evidence="2">
    <location>
        <begin position="1"/>
        <end position="74"/>
    </location>
</feature>
<name>NCAP_INBAA</name>
<keyword id="KW-0167">Capsid protein</keyword>
<keyword id="KW-1139">Helical capsid protein</keyword>
<keyword id="KW-1048">Host nucleus</keyword>
<keyword id="KW-0945">Host-virus interaction</keyword>
<keyword id="KW-0687">Ribonucleoprotein</keyword>
<keyword id="KW-0694">RNA-binding</keyword>
<keyword id="KW-0543">Viral nucleoprotein</keyword>
<keyword id="KW-1163">Viral penetration into host nucleus</keyword>
<keyword id="KW-0946">Virion</keyword>
<keyword id="KW-1160">Virus entry into host cell</keyword>
<organismHost>
    <name type="scientific">Homo sapiens</name>
    <name type="common">Human</name>
    <dbReference type="NCBI Taxonomy" id="9606"/>
</organismHost>
<reference key="1">
    <citation type="journal article" date="1989" name="Nucleic Acids Res.">
        <title>Sequence of a cDNA clone of the nucleoprotein gene of influenza B/Ann Arbor/1/86.</title>
        <authorList>
            <person name="Rota P.A."/>
        </authorList>
    </citation>
    <scope>NUCLEOTIDE SEQUENCE [GENOMIC RNA]</scope>
</reference>
<organism>
    <name type="scientific">Influenza B virus (strain B/Ann Arbor/1/1986)</name>
    <dbReference type="NCBI Taxonomy" id="11521"/>
    <lineage>
        <taxon>Viruses</taxon>
        <taxon>Riboviria</taxon>
        <taxon>Orthornavirae</taxon>
        <taxon>Negarnaviricota</taxon>
        <taxon>Polyploviricotina</taxon>
        <taxon>Insthoviricetes</taxon>
        <taxon>Articulavirales</taxon>
        <taxon>Orthomyxoviridae</taxon>
        <taxon>Betainfluenzavirus</taxon>
        <taxon>Betainfluenzavirus influenzae</taxon>
        <taxon>Influenza B virus</taxon>
    </lineage>
</organism>
<accession>P11102</accession>
<proteinExistence type="inferred from homology"/>
<protein>
    <recommendedName>
        <fullName evidence="1">Nucleoprotein</fullName>
    </recommendedName>
    <alternativeName>
        <fullName evidence="1">Nucleocapsid protein</fullName>
        <shortName evidence="1">Protein N</shortName>
    </alternativeName>
</protein>
<comment type="function">
    <text evidence="1">Encapsidates the negative strand viral RNA, protecting it from nucleases. The encapsidated genomic RNA is termed the ribonucleoprotein (RNP) and serves as template for transcription and replication. The RNP needs to be localized in the host nucleus to start an infectious cycle, but is too large to diffuse through the nuclear pore complex. NP comprises at least 2 nuclear localization signals that are responsible for the active RNP import into the nucleus through cellular importin alpha/beta pathway. Later in the infection, nclear export of RNPs are mediated through viral proteins NEP interacting with M1 which binds nucleoproteins. It is possible that nucleoprotein binds directly host exportin-1/XPO1 and plays an active role in RNPs nuclear export. M1 interaction with RNP seems to hide nucleoprotein's nuclear localization signals. Soon after a virion infects a new cell, M1 dissociates from the RNP under acidification of the virion driven by M2 protein. Dissociation of M1 from RNP unmasks nucleoprotein's nuclear localization signals, targeting the RNP to the nucleus.</text>
</comment>
<comment type="subunit">
    <text evidence="1">Homomultimerizes to form the nucleocapsid. May bind host exportin-1/XPO1. Binds to viral genomic RNA. Protein-RNA contacts are mediated by a combination of electrostatic interactions between positively charged residues and the phosphate backbone and planar interactions between aromatic side chains and bases.</text>
</comment>
<comment type="subcellular location">
    <subcellularLocation>
        <location evidence="1">Virion</location>
    </subcellularLocation>
    <subcellularLocation>
        <location evidence="1">Host nucleus</location>
    </subcellularLocation>
</comment>
<comment type="PTM">
    <text evidence="1">Late in virus-infected cells, may be cleaved from a 56-kDa protein to a 53-kDa protein by a cellular caspase. This cleavage might be a marker for the onset of apoptosis in infected cells or have a specific function in virus host interaction.</text>
</comment>
<comment type="similarity">
    <text evidence="1">Belongs to the influenza viruses nucleoprotein family.</text>
</comment>
<evidence type="ECO:0000255" key="1">
    <source>
        <dbReference type="HAMAP-Rule" id="MF_04070"/>
    </source>
</evidence>
<evidence type="ECO:0000256" key="2">
    <source>
        <dbReference type="SAM" id="MobiDB-lite"/>
    </source>
</evidence>
<dbReference type="EMBL" id="X14217">
    <property type="protein sequence ID" value="CAA32437.1"/>
    <property type="molecule type" value="Genomic_RNA"/>
</dbReference>
<dbReference type="PIR" id="A34063">
    <property type="entry name" value="VHIVBA"/>
</dbReference>
<dbReference type="SMR" id="P11102"/>
<dbReference type="GO" id="GO:0019029">
    <property type="term" value="C:helical viral capsid"/>
    <property type="evidence" value="ECO:0007669"/>
    <property type="project" value="UniProtKB-UniRule"/>
</dbReference>
<dbReference type="GO" id="GO:0043657">
    <property type="term" value="C:host cell"/>
    <property type="evidence" value="ECO:0007669"/>
    <property type="project" value="GOC"/>
</dbReference>
<dbReference type="GO" id="GO:0042025">
    <property type="term" value="C:host cell nucleus"/>
    <property type="evidence" value="ECO:0007669"/>
    <property type="project" value="UniProtKB-SubCell"/>
</dbReference>
<dbReference type="GO" id="GO:1990904">
    <property type="term" value="C:ribonucleoprotein complex"/>
    <property type="evidence" value="ECO:0007669"/>
    <property type="project" value="UniProtKB-KW"/>
</dbReference>
<dbReference type="GO" id="GO:0019013">
    <property type="term" value="C:viral nucleocapsid"/>
    <property type="evidence" value="ECO:0007669"/>
    <property type="project" value="UniProtKB-UniRule"/>
</dbReference>
<dbReference type="GO" id="GO:0003723">
    <property type="term" value="F:RNA binding"/>
    <property type="evidence" value="ECO:0007669"/>
    <property type="project" value="UniProtKB-UniRule"/>
</dbReference>
<dbReference type="GO" id="GO:0005198">
    <property type="term" value="F:structural molecule activity"/>
    <property type="evidence" value="ECO:0007669"/>
    <property type="project" value="UniProtKB-UniRule"/>
</dbReference>
<dbReference type="GO" id="GO:0046718">
    <property type="term" value="P:symbiont entry into host cell"/>
    <property type="evidence" value="ECO:0007669"/>
    <property type="project" value="UniProtKB-KW"/>
</dbReference>
<dbReference type="GO" id="GO:0075732">
    <property type="term" value="P:viral penetration into host nucleus"/>
    <property type="evidence" value="ECO:0007669"/>
    <property type="project" value="UniProtKB-UniRule"/>
</dbReference>
<dbReference type="HAMAP" id="MF_04070">
    <property type="entry name" value="INFV_NCAP"/>
    <property type="match status" value="1"/>
</dbReference>
<dbReference type="InterPro" id="IPR002141">
    <property type="entry name" value="Flu_NP"/>
</dbReference>
<dbReference type="Pfam" id="PF00506">
    <property type="entry name" value="Flu_NP"/>
    <property type="match status" value="1"/>
</dbReference>
<dbReference type="SUPFAM" id="SSF161003">
    <property type="entry name" value="flu NP-like"/>
    <property type="match status" value="1"/>
</dbReference>